<dbReference type="EMBL" id="BA000039">
    <property type="protein sequence ID" value="BAC09839.1"/>
    <property type="status" value="ALT_INIT"/>
    <property type="molecule type" value="Genomic_DNA"/>
</dbReference>
<dbReference type="RefSeq" id="NP_683077.1">
    <property type="nucleotide sequence ID" value="NC_004113.1"/>
</dbReference>
<dbReference type="RefSeq" id="WP_231833781.1">
    <property type="nucleotide sequence ID" value="NC_004113.1"/>
</dbReference>
<dbReference type="STRING" id="197221.gene:10748905"/>
<dbReference type="EnsemblBacteria" id="BAC09839">
    <property type="protein sequence ID" value="BAC09839"/>
    <property type="gene ID" value="BAC09839"/>
</dbReference>
<dbReference type="KEGG" id="tel:tlr2287"/>
<dbReference type="PATRIC" id="fig|197221.4.peg.2396"/>
<dbReference type="eggNOG" id="COG4399">
    <property type="taxonomic scope" value="Bacteria"/>
</dbReference>
<dbReference type="Proteomes" id="UP000000440">
    <property type="component" value="Chromosome"/>
</dbReference>
<dbReference type="GO" id="GO:0005886">
    <property type="term" value="C:plasma membrane"/>
    <property type="evidence" value="ECO:0007669"/>
    <property type="project" value="UniProtKB-SubCell"/>
</dbReference>
<dbReference type="InterPro" id="IPR007383">
    <property type="entry name" value="DUF445"/>
</dbReference>
<dbReference type="InterPro" id="IPR016991">
    <property type="entry name" value="UCP032178"/>
</dbReference>
<dbReference type="PANTHER" id="PTHR35791">
    <property type="entry name" value="UPF0754 MEMBRANE PROTEIN YHEB"/>
    <property type="match status" value="1"/>
</dbReference>
<dbReference type="PANTHER" id="PTHR35791:SF1">
    <property type="entry name" value="UPF0754 MEMBRANE PROTEIN YHEB"/>
    <property type="match status" value="1"/>
</dbReference>
<dbReference type="Pfam" id="PF04286">
    <property type="entry name" value="DUF445"/>
    <property type="match status" value="1"/>
</dbReference>
<dbReference type="PIRSF" id="PIRSF032178">
    <property type="entry name" value="UCP032178"/>
    <property type="match status" value="1"/>
</dbReference>
<feature type="chain" id="PRO_0000388328" description="UPF0754 membrane protein tlr2287">
    <location>
        <begin position="1"/>
        <end position="414"/>
    </location>
</feature>
<feature type="transmembrane region" description="Helical" evidence="2">
    <location>
        <begin position="2"/>
        <end position="22"/>
    </location>
</feature>
<feature type="transmembrane region" description="Helical" evidence="2">
    <location>
        <begin position="386"/>
        <end position="406"/>
    </location>
</feature>
<evidence type="ECO:0000250" key="1"/>
<evidence type="ECO:0000255" key="2"/>
<evidence type="ECO:0000305" key="3"/>
<gene>
    <name type="ordered locus">tlr2287</name>
</gene>
<keyword id="KW-0997">Cell inner membrane</keyword>
<keyword id="KW-1003">Cell membrane</keyword>
<keyword id="KW-0472">Membrane</keyword>
<keyword id="KW-1185">Reference proteome</keyword>
<keyword id="KW-0812">Transmembrane</keyword>
<keyword id="KW-1133">Transmembrane helix</keyword>
<accession>Q8DGM9</accession>
<protein>
    <recommendedName>
        <fullName>UPF0754 membrane protein tlr2287</fullName>
    </recommendedName>
</protein>
<organism>
    <name type="scientific">Thermosynechococcus vestitus (strain NIES-2133 / IAM M-273 / BP-1)</name>
    <dbReference type="NCBI Taxonomy" id="197221"/>
    <lineage>
        <taxon>Bacteria</taxon>
        <taxon>Bacillati</taxon>
        <taxon>Cyanobacteriota</taxon>
        <taxon>Cyanophyceae</taxon>
        <taxon>Acaryochloridales</taxon>
        <taxon>Thermosynechococcaceae</taxon>
        <taxon>Thermosynechococcus</taxon>
    </lineage>
</organism>
<name>Y2287_THEVB</name>
<sequence>MADISYWTLLVPPLAGGVIGYFTNDLAITMLFRPYKPIYIGGKQVPFTPGLIPRNQERLARRIADAILGSLLTPEELQNLARRLLQVQRVKAVIHWLLQTSLSQIQAQSEQRSAQVLANILRDFFGSALPRLMKVWSRREDFLEPQLNQLFDQVLVELQLSDEQAEKLADWLLSVMLPPDRLRLAIIDFLTDRTINVLDQELRQNTSGTYWVVANLVGVRNTLIRLREYCLNEREACNRRLGDLITALALRQRLVEALQNLTLQSLPLGTVRELRQLFRQTVRSYIQEQGASVIETVSQTVEWETISLSILRRLRDSASLGASLEVVSDELALVLDRYLERDMELIVERAIPILDLDRVIVDRVKATSPENLELAIQGIVRSELQAIVRLGGILGFLIGVVQAGVLYWQSLQVP</sequence>
<reference key="1">
    <citation type="journal article" date="2002" name="DNA Res.">
        <title>Complete genome structure of the thermophilic cyanobacterium Thermosynechococcus elongatus BP-1.</title>
        <authorList>
            <person name="Nakamura Y."/>
            <person name="Kaneko T."/>
            <person name="Sato S."/>
            <person name="Ikeuchi M."/>
            <person name="Katoh H."/>
            <person name="Sasamoto S."/>
            <person name="Watanabe A."/>
            <person name="Iriguchi M."/>
            <person name="Kawashima K."/>
            <person name="Kimura T."/>
            <person name="Kishida Y."/>
            <person name="Kiyokawa C."/>
            <person name="Kohara M."/>
            <person name="Matsumoto M."/>
            <person name="Matsuno A."/>
            <person name="Nakazaki N."/>
            <person name="Shimpo S."/>
            <person name="Sugimoto M."/>
            <person name="Takeuchi C."/>
            <person name="Yamada M."/>
            <person name="Tabata S."/>
        </authorList>
    </citation>
    <scope>NUCLEOTIDE SEQUENCE [LARGE SCALE GENOMIC DNA]</scope>
    <source>
        <strain>NIES-2133 / IAM M-273 / BP-1</strain>
    </source>
</reference>
<proteinExistence type="inferred from homology"/>
<comment type="subcellular location">
    <subcellularLocation>
        <location evidence="1">Cell inner membrane</location>
        <topology evidence="1">Multi-pass membrane protein</topology>
    </subcellularLocation>
</comment>
<comment type="similarity">
    <text evidence="3">Belongs to the UPF0754 family.</text>
</comment>
<comment type="sequence caution" evidence="3">
    <conflict type="erroneous initiation">
        <sequence resource="EMBL-CDS" id="BAC09839"/>
    </conflict>
</comment>